<comment type="function">
    <text evidence="1">Component of the dark-operative protochlorophyllide reductase (DPOR) that uses Mg-ATP and reduced ferredoxin to reduce ring D of protochlorophyllide (Pchlide) to form chlorophyllide a (Chlide). This reaction is light-independent. The L component serves as a unique electron donor to the NB-component of the complex, and binds Mg-ATP.</text>
</comment>
<comment type="catalytic activity">
    <reaction evidence="1">
        <text>chlorophyllide a + oxidized 2[4Fe-4S]-[ferredoxin] + 2 ADP + 2 phosphate = protochlorophyllide a + reduced 2[4Fe-4S]-[ferredoxin] + 2 ATP + 2 H2O</text>
        <dbReference type="Rhea" id="RHEA:28202"/>
        <dbReference type="Rhea" id="RHEA-COMP:10002"/>
        <dbReference type="Rhea" id="RHEA-COMP:10004"/>
        <dbReference type="ChEBI" id="CHEBI:15377"/>
        <dbReference type="ChEBI" id="CHEBI:30616"/>
        <dbReference type="ChEBI" id="CHEBI:33722"/>
        <dbReference type="ChEBI" id="CHEBI:33723"/>
        <dbReference type="ChEBI" id="CHEBI:43474"/>
        <dbReference type="ChEBI" id="CHEBI:83348"/>
        <dbReference type="ChEBI" id="CHEBI:83350"/>
        <dbReference type="ChEBI" id="CHEBI:456216"/>
        <dbReference type="EC" id="1.3.7.7"/>
    </reaction>
</comment>
<comment type="cofactor">
    <cofactor evidence="1">
        <name>[4Fe-4S] cluster</name>
        <dbReference type="ChEBI" id="CHEBI:49883"/>
    </cofactor>
    <text evidence="1">Binds 1 [4Fe-4S] cluster per dimer.</text>
</comment>
<comment type="pathway">
    <text evidence="1">Porphyrin-containing compound metabolism; bacteriochlorophyll biosynthesis (light-independent).</text>
</comment>
<comment type="subunit">
    <text evidence="1">Homodimer. Protochlorophyllide reductase is composed of three subunits; BchL, BchN and BchB.</text>
</comment>
<comment type="similarity">
    <text evidence="1">Belongs to the NifH/BchL/ChlL family.</text>
</comment>
<protein>
    <recommendedName>
        <fullName evidence="1">Light-independent protochlorophyllide reductase iron-sulfur ATP-binding protein</fullName>
        <shortName evidence="1">DPOR subunit L</shortName>
        <shortName evidence="1">LI-POR subunit L</shortName>
        <ecNumber evidence="1">1.3.7.7</ecNumber>
    </recommendedName>
</protein>
<dbReference type="EC" id="1.3.7.7" evidence="1"/>
<dbReference type="EMBL" id="CP001029">
    <property type="protein sequence ID" value="ACB83450.1"/>
    <property type="molecule type" value="Genomic_DNA"/>
</dbReference>
<dbReference type="RefSeq" id="WP_012457046.1">
    <property type="nucleotide sequence ID" value="NC_010725.1"/>
</dbReference>
<dbReference type="SMR" id="B1ZBP2"/>
<dbReference type="STRING" id="441620.Mpop_5358"/>
<dbReference type="KEGG" id="mpo:Mpop_5358"/>
<dbReference type="eggNOG" id="COG1348">
    <property type="taxonomic scope" value="Bacteria"/>
</dbReference>
<dbReference type="HOGENOM" id="CLU_059373_2_0_5"/>
<dbReference type="OrthoDB" id="9778641at2"/>
<dbReference type="UniPathway" id="UPA00671"/>
<dbReference type="Proteomes" id="UP000007136">
    <property type="component" value="Chromosome"/>
</dbReference>
<dbReference type="GO" id="GO:0051539">
    <property type="term" value="F:4 iron, 4 sulfur cluster binding"/>
    <property type="evidence" value="ECO:0007669"/>
    <property type="project" value="UniProtKB-UniRule"/>
</dbReference>
<dbReference type="GO" id="GO:0005524">
    <property type="term" value="F:ATP binding"/>
    <property type="evidence" value="ECO:0007669"/>
    <property type="project" value="UniProtKB-UniRule"/>
</dbReference>
<dbReference type="GO" id="GO:0046872">
    <property type="term" value="F:metal ion binding"/>
    <property type="evidence" value="ECO:0007669"/>
    <property type="project" value="UniProtKB-KW"/>
</dbReference>
<dbReference type="GO" id="GO:0016730">
    <property type="term" value="F:oxidoreductase activity, acting on iron-sulfur proteins as donors"/>
    <property type="evidence" value="ECO:0007669"/>
    <property type="project" value="InterPro"/>
</dbReference>
<dbReference type="GO" id="GO:0016636">
    <property type="term" value="F:oxidoreductase activity, acting on the CH-CH group of donors, iron-sulfur protein as acceptor"/>
    <property type="evidence" value="ECO:0007669"/>
    <property type="project" value="UniProtKB-UniRule"/>
</dbReference>
<dbReference type="GO" id="GO:0036070">
    <property type="term" value="P:light-independent bacteriochlorophyll biosynthetic process"/>
    <property type="evidence" value="ECO:0007669"/>
    <property type="project" value="UniProtKB-UniRule"/>
</dbReference>
<dbReference type="GO" id="GO:0019685">
    <property type="term" value="P:photosynthesis, dark reaction"/>
    <property type="evidence" value="ECO:0007669"/>
    <property type="project" value="InterPro"/>
</dbReference>
<dbReference type="CDD" id="cd02032">
    <property type="entry name" value="Bchl-like"/>
    <property type="match status" value="1"/>
</dbReference>
<dbReference type="Gene3D" id="3.40.50.300">
    <property type="entry name" value="P-loop containing nucleotide triphosphate hydrolases"/>
    <property type="match status" value="1"/>
</dbReference>
<dbReference type="HAMAP" id="MF_00355">
    <property type="entry name" value="ChlL_BchL"/>
    <property type="match status" value="1"/>
</dbReference>
<dbReference type="InterPro" id="IPR030655">
    <property type="entry name" value="NifH/chlL_CS"/>
</dbReference>
<dbReference type="InterPro" id="IPR000392">
    <property type="entry name" value="NifH/frxC"/>
</dbReference>
<dbReference type="InterPro" id="IPR027417">
    <property type="entry name" value="P-loop_NTPase"/>
</dbReference>
<dbReference type="InterPro" id="IPR005971">
    <property type="entry name" value="Protochlorophyllide_ATP-bd"/>
</dbReference>
<dbReference type="NCBIfam" id="TIGR01281">
    <property type="entry name" value="DPOR_bchL"/>
    <property type="match status" value="1"/>
</dbReference>
<dbReference type="PANTHER" id="PTHR42864">
    <property type="entry name" value="LIGHT-INDEPENDENT PROTOCHLOROPHYLLIDE REDUCTASE IRON-SULFUR ATP-BINDING PROTEIN"/>
    <property type="match status" value="1"/>
</dbReference>
<dbReference type="PANTHER" id="PTHR42864:SF2">
    <property type="entry name" value="LIGHT-INDEPENDENT PROTOCHLOROPHYLLIDE REDUCTASE IRON-SULFUR ATP-BINDING PROTEIN"/>
    <property type="match status" value="1"/>
</dbReference>
<dbReference type="Pfam" id="PF00142">
    <property type="entry name" value="Fer4_NifH"/>
    <property type="match status" value="1"/>
</dbReference>
<dbReference type="PIRSF" id="PIRSF000363">
    <property type="entry name" value="Nitrogenase_iron"/>
    <property type="match status" value="1"/>
</dbReference>
<dbReference type="PRINTS" id="PR00091">
    <property type="entry name" value="NITROGNASEII"/>
</dbReference>
<dbReference type="SUPFAM" id="SSF52540">
    <property type="entry name" value="P-loop containing nucleoside triphosphate hydrolases"/>
    <property type="match status" value="1"/>
</dbReference>
<dbReference type="PROSITE" id="PS00746">
    <property type="entry name" value="NIFH_FRXC_1"/>
    <property type="match status" value="1"/>
</dbReference>
<dbReference type="PROSITE" id="PS00692">
    <property type="entry name" value="NIFH_FRXC_2"/>
    <property type="match status" value="1"/>
</dbReference>
<dbReference type="PROSITE" id="PS51026">
    <property type="entry name" value="NIFH_FRXC_3"/>
    <property type="match status" value="1"/>
</dbReference>
<proteinExistence type="inferred from homology"/>
<organism>
    <name type="scientific">Methylorubrum populi (strain ATCC BAA-705 / NCIMB 13946 / BJ001)</name>
    <name type="common">Methylobacterium populi</name>
    <dbReference type="NCBI Taxonomy" id="441620"/>
    <lineage>
        <taxon>Bacteria</taxon>
        <taxon>Pseudomonadati</taxon>
        <taxon>Pseudomonadota</taxon>
        <taxon>Alphaproteobacteria</taxon>
        <taxon>Hyphomicrobiales</taxon>
        <taxon>Methylobacteriaceae</taxon>
        <taxon>Methylorubrum</taxon>
    </lineage>
</organism>
<keyword id="KW-0004">4Fe-4S</keyword>
<keyword id="KW-0067">ATP-binding</keyword>
<keyword id="KW-0077">Bacteriochlorophyll biosynthesis</keyword>
<keyword id="KW-0149">Chlorophyll biosynthesis</keyword>
<keyword id="KW-0408">Iron</keyword>
<keyword id="KW-0411">Iron-sulfur</keyword>
<keyword id="KW-0460">Magnesium</keyword>
<keyword id="KW-0479">Metal-binding</keyword>
<keyword id="KW-0547">Nucleotide-binding</keyword>
<keyword id="KW-0560">Oxidoreductase</keyword>
<keyword id="KW-0602">Photosynthesis</keyword>
<name>BCHL_METPB</name>
<sequence>MNIAIRNPVPIRREEGSLQVALDPADRIETAKVFAVYGKGGIGKSTTSSNLSVAFSKLGKRVLQIGCDPKHDSTFTLTKRLAPTVIDALESVNFHSEELRPEDFVVEGFNGVKCVEAGGPPAGTGCGGYVVGQTVKLLKEHHLLEDTDVVVFDVLGDVVCGGFASPLQHADRALIVTANDFDSIFAMNRIVAAIHSKSKNYGVRLGGVIANRSAKTDEIDRFNAAVGLRRLAHFPDLDVVRRSRLKKSTLFEMEPSPELKAVTDEYMQLAETLWAGADPCEAVPMKDRDLFEFLGFD</sequence>
<reference key="1">
    <citation type="submission" date="2008-04" db="EMBL/GenBank/DDBJ databases">
        <title>Complete sequence of chromosome of Methylobacterium populi BJ001.</title>
        <authorList>
            <consortium name="US DOE Joint Genome Institute"/>
            <person name="Copeland A."/>
            <person name="Lucas S."/>
            <person name="Lapidus A."/>
            <person name="Glavina del Rio T."/>
            <person name="Dalin E."/>
            <person name="Tice H."/>
            <person name="Bruce D."/>
            <person name="Goodwin L."/>
            <person name="Pitluck S."/>
            <person name="Chertkov O."/>
            <person name="Brettin T."/>
            <person name="Detter J.C."/>
            <person name="Han C."/>
            <person name="Kuske C.R."/>
            <person name="Schmutz J."/>
            <person name="Larimer F."/>
            <person name="Land M."/>
            <person name="Hauser L."/>
            <person name="Kyrpides N."/>
            <person name="Mikhailova N."/>
            <person name="Marx C."/>
            <person name="Richardson P."/>
        </authorList>
    </citation>
    <scope>NUCLEOTIDE SEQUENCE [LARGE SCALE GENOMIC DNA]</scope>
    <source>
        <strain>ATCC BAA-705 / NCIMB 13946 / BJ001</strain>
    </source>
</reference>
<accession>B1ZBP2</accession>
<feature type="chain" id="PRO_1000133440" description="Light-independent protochlorophyllide reductase iron-sulfur ATP-binding protein">
    <location>
        <begin position="1"/>
        <end position="297"/>
    </location>
</feature>
<feature type="binding site" evidence="1">
    <location>
        <begin position="41"/>
        <end position="46"/>
    </location>
    <ligand>
        <name>ATP</name>
        <dbReference type="ChEBI" id="CHEBI:30616"/>
    </ligand>
</feature>
<feature type="binding site" evidence="1">
    <location>
        <position position="45"/>
    </location>
    <ligand>
        <name>Mg(2+)</name>
        <dbReference type="ChEBI" id="CHEBI:18420"/>
    </ligand>
</feature>
<feature type="binding site" evidence="1">
    <location>
        <position position="70"/>
    </location>
    <ligand>
        <name>ATP</name>
        <dbReference type="ChEBI" id="CHEBI:30616"/>
    </ligand>
</feature>
<feature type="binding site" evidence="1">
    <location>
        <position position="126"/>
    </location>
    <ligand>
        <name>[4Fe-4S] cluster</name>
        <dbReference type="ChEBI" id="CHEBI:49883"/>
        <note>ligand shared between dimeric partners</note>
    </ligand>
</feature>
<feature type="binding site" evidence="1">
    <location>
        <position position="160"/>
    </location>
    <ligand>
        <name>[4Fe-4S] cluster</name>
        <dbReference type="ChEBI" id="CHEBI:49883"/>
        <note>ligand shared between dimeric partners</note>
    </ligand>
</feature>
<feature type="binding site" evidence="1">
    <location>
        <begin position="211"/>
        <end position="212"/>
    </location>
    <ligand>
        <name>ATP</name>
        <dbReference type="ChEBI" id="CHEBI:30616"/>
    </ligand>
</feature>
<feature type="binding site" evidence="1">
    <location>
        <begin position="235"/>
        <end position="237"/>
    </location>
    <ligand>
        <name>ATP</name>
        <dbReference type="ChEBI" id="CHEBI:30616"/>
    </ligand>
</feature>
<gene>
    <name evidence="1" type="primary">bchL</name>
    <name type="ordered locus">Mpop_5358</name>
</gene>
<evidence type="ECO:0000255" key="1">
    <source>
        <dbReference type="HAMAP-Rule" id="MF_00355"/>
    </source>
</evidence>